<gene>
    <name type="primary">MAP6D1</name>
</gene>
<name>MA6D1_BOVIN</name>
<evidence type="ECO:0000250" key="1"/>
<evidence type="ECO:0000250" key="2">
    <source>
        <dbReference type="UniProtKB" id="Q14BB9"/>
    </source>
</evidence>
<evidence type="ECO:0000250" key="3">
    <source>
        <dbReference type="UniProtKB" id="Q9H9H5"/>
    </source>
</evidence>
<evidence type="ECO:0000256" key="4">
    <source>
        <dbReference type="SAM" id="MobiDB-lite"/>
    </source>
</evidence>
<evidence type="ECO:0000305" key="5"/>
<feature type="chain" id="PRO_0000271914" description="MAP6 domain-containing protein 1">
    <location>
        <begin position="1"/>
        <end position="192"/>
    </location>
</feature>
<feature type="region of interest" description="Disordered" evidence="4">
    <location>
        <begin position="36"/>
        <end position="106"/>
    </location>
</feature>
<feature type="region of interest" description="Mn 1" evidence="3">
    <location>
        <begin position="123"/>
        <end position="136"/>
    </location>
</feature>
<feature type="region of interest" description="Mn 2" evidence="3">
    <location>
        <begin position="158"/>
        <end position="170"/>
    </location>
</feature>
<feature type="compositionally biased region" description="Low complexity" evidence="4">
    <location>
        <begin position="43"/>
        <end position="58"/>
    </location>
</feature>
<feature type="modified residue" description="Phosphoserine" evidence="2">
    <location>
        <position position="38"/>
    </location>
</feature>
<feature type="modified residue" description="Phosphoserine" evidence="2">
    <location>
        <position position="160"/>
    </location>
</feature>
<feature type="lipid moiety-binding region" description="S-palmitoyl cysteine" evidence="1">
    <location>
        <position position="5"/>
    </location>
</feature>
<feature type="lipid moiety-binding region" description="S-palmitoyl cysteine" evidence="1">
    <location>
        <position position="10"/>
    </location>
</feature>
<feature type="lipid moiety-binding region" description="S-palmitoyl cysteine" evidence="1">
    <location>
        <position position="11"/>
    </location>
</feature>
<keyword id="KW-0112">Calmodulin-binding</keyword>
<keyword id="KW-0963">Cytoplasm</keyword>
<keyword id="KW-0206">Cytoskeleton</keyword>
<keyword id="KW-0333">Golgi apparatus</keyword>
<keyword id="KW-0449">Lipoprotein</keyword>
<keyword id="KW-0564">Palmitate</keyword>
<keyword id="KW-0597">Phosphoprotein</keyword>
<keyword id="KW-1185">Reference proteome</keyword>
<accession>Q0P591</accession>
<dbReference type="EMBL" id="BC120336">
    <property type="protein sequence ID" value="AAI20337.1"/>
    <property type="molecule type" value="mRNA"/>
</dbReference>
<dbReference type="RefSeq" id="NP_001069822.1">
    <property type="nucleotide sequence ID" value="NM_001076354.1"/>
</dbReference>
<dbReference type="RefSeq" id="XP_015327772.1">
    <property type="nucleotide sequence ID" value="XM_015472286.1"/>
</dbReference>
<dbReference type="FunCoup" id="Q0P591">
    <property type="interactions" value="704"/>
</dbReference>
<dbReference type="STRING" id="9913.ENSBTAP00000043113"/>
<dbReference type="PaxDb" id="9913-ENSBTAP00000043113"/>
<dbReference type="GeneID" id="614904"/>
<dbReference type="KEGG" id="bta:614904"/>
<dbReference type="CTD" id="79929"/>
<dbReference type="VEuPathDB" id="HostDB:ENSBTAG00000014459"/>
<dbReference type="eggNOG" id="ENOG502RXB9">
    <property type="taxonomic scope" value="Eukaryota"/>
</dbReference>
<dbReference type="HOGENOM" id="CLU_089524_0_0_1"/>
<dbReference type="InParanoid" id="Q0P591"/>
<dbReference type="OMA" id="PREDYQP"/>
<dbReference type="OrthoDB" id="9632339at2759"/>
<dbReference type="TreeFam" id="TF338320"/>
<dbReference type="Proteomes" id="UP000009136">
    <property type="component" value="Chromosome 1"/>
</dbReference>
<dbReference type="Bgee" id="ENSBTAG00000014459">
    <property type="expression patterns" value="Expressed in midbrain and 100 other cell types or tissues"/>
</dbReference>
<dbReference type="GO" id="GO:0005801">
    <property type="term" value="C:cis-Golgi network"/>
    <property type="evidence" value="ECO:0000318"/>
    <property type="project" value="GO_Central"/>
</dbReference>
<dbReference type="GO" id="GO:0005798">
    <property type="term" value="C:Golgi-associated vesicle"/>
    <property type="evidence" value="ECO:0000318"/>
    <property type="project" value="GO_Central"/>
</dbReference>
<dbReference type="GO" id="GO:0005874">
    <property type="term" value="C:microtubule"/>
    <property type="evidence" value="ECO:0000318"/>
    <property type="project" value="GO_Central"/>
</dbReference>
<dbReference type="GO" id="GO:0005516">
    <property type="term" value="F:calmodulin binding"/>
    <property type="evidence" value="ECO:0007669"/>
    <property type="project" value="UniProtKB-KW"/>
</dbReference>
<dbReference type="GO" id="GO:0008017">
    <property type="term" value="F:microtubule binding"/>
    <property type="evidence" value="ECO:0000318"/>
    <property type="project" value="GO_Central"/>
</dbReference>
<dbReference type="GO" id="GO:0030705">
    <property type="term" value="P:cytoskeleton-dependent intracellular transport"/>
    <property type="evidence" value="ECO:0000318"/>
    <property type="project" value="GO_Central"/>
</dbReference>
<dbReference type="GO" id="GO:0000226">
    <property type="term" value="P:microtubule cytoskeleton organization"/>
    <property type="evidence" value="ECO:0007669"/>
    <property type="project" value="InterPro"/>
</dbReference>
<dbReference type="GO" id="GO:0007026">
    <property type="term" value="P:negative regulation of microtubule depolymerization"/>
    <property type="evidence" value="ECO:0007669"/>
    <property type="project" value="Ensembl"/>
</dbReference>
<dbReference type="GO" id="GO:0070507">
    <property type="term" value="P:regulation of microtubule cytoskeleton organization"/>
    <property type="evidence" value="ECO:0000318"/>
    <property type="project" value="GO_Central"/>
</dbReference>
<dbReference type="InterPro" id="IPR007882">
    <property type="entry name" value="MAP6"/>
</dbReference>
<dbReference type="PANTHER" id="PTHR14759:SF37">
    <property type="entry name" value="MAP6 DOMAIN-CONTAINING PROTEIN 1"/>
    <property type="match status" value="1"/>
</dbReference>
<dbReference type="PANTHER" id="PTHR14759">
    <property type="entry name" value="STOP PROTEIN"/>
    <property type="match status" value="1"/>
</dbReference>
<organism>
    <name type="scientific">Bos taurus</name>
    <name type="common">Bovine</name>
    <dbReference type="NCBI Taxonomy" id="9913"/>
    <lineage>
        <taxon>Eukaryota</taxon>
        <taxon>Metazoa</taxon>
        <taxon>Chordata</taxon>
        <taxon>Craniata</taxon>
        <taxon>Vertebrata</taxon>
        <taxon>Euteleostomi</taxon>
        <taxon>Mammalia</taxon>
        <taxon>Eutheria</taxon>
        <taxon>Laurasiatheria</taxon>
        <taxon>Artiodactyla</taxon>
        <taxon>Ruminantia</taxon>
        <taxon>Pecora</taxon>
        <taxon>Bovidae</taxon>
        <taxon>Bovinae</taxon>
        <taxon>Bos</taxon>
    </lineage>
</organism>
<reference key="1">
    <citation type="submission" date="2006-08" db="EMBL/GenBank/DDBJ databases">
        <authorList>
            <consortium name="NIH - Mammalian Gene Collection (MGC) project"/>
        </authorList>
    </citation>
    <scope>NUCLEOTIDE SEQUENCE [LARGE SCALE MRNA]</scope>
    <source>
        <strain>Hereford</strain>
        <tissue>Hippocampus</tissue>
    </source>
</reference>
<comment type="function">
    <text evidence="1">May have microtubule-stabilizing activity.</text>
</comment>
<comment type="subunit">
    <text evidence="1">Interacts with calmodulin.</text>
</comment>
<comment type="subcellular location">
    <subcellularLocation>
        <location>Golgi apparatus</location>
    </subcellularLocation>
    <subcellularLocation>
        <location evidence="1">Cytoplasm</location>
        <location evidence="1">Cytoskeleton</location>
    </subcellularLocation>
    <text evidence="1">Colocalizes with microtubules.</text>
</comment>
<comment type="PTM">
    <text evidence="1">Palmitoylated. Palmitoylation enhances association with microtubules (By similarity).</text>
</comment>
<comment type="similarity">
    <text evidence="5">Belongs to the STOP family.</text>
</comment>
<protein>
    <recommendedName>
        <fullName>MAP6 domain-containing protein 1</fullName>
    </recommendedName>
</protein>
<proteinExistence type="evidence at transcript level"/>
<sequence>MAWPCISRLCCLARRWNQLDRSDVAVPLTLHSYSDLESEEPIPGGVPSRRGPSPAGSRDPGRDVPLTQYQRDFGVWTAPSGSRDATQGRGPGASSRRTKPSATPGRGVYVLPIGDADAAAVATTSYRQEFQAWTGVKPSRSTKVKPAKVITTHSSGWDGSPRAGFQAPEVRKKFAPNPSAIFQASAPRILNV</sequence>